<dbReference type="EMBL" id="AE017283">
    <property type="protein sequence ID" value="AAT82653.1"/>
    <property type="molecule type" value="Genomic_DNA"/>
</dbReference>
<dbReference type="RefSeq" id="WP_002515457.1">
    <property type="nucleotide sequence ID" value="NZ_CP025935.1"/>
</dbReference>
<dbReference type="PDB" id="8CRX">
    <property type="method" value="EM"/>
    <property type="resolution" value="2.78 A"/>
    <property type="chains" value="T=1-88"/>
</dbReference>
<dbReference type="PDB" id="8CWO">
    <property type="method" value="EM"/>
    <property type="resolution" value="2.84 A"/>
    <property type="chains" value="T=1-88"/>
</dbReference>
<dbReference type="PDBsum" id="8CRX"/>
<dbReference type="PDBsum" id="8CWO"/>
<dbReference type="SMR" id="Q6A9B3"/>
<dbReference type="EnsemblBacteria" id="AAT82653">
    <property type="protein sequence ID" value="AAT82653"/>
    <property type="gene ID" value="PPA0898"/>
</dbReference>
<dbReference type="GeneID" id="92856866"/>
<dbReference type="KEGG" id="pac:PPA0898"/>
<dbReference type="eggNOG" id="COG0268">
    <property type="taxonomic scope" value="Bacteria"/>
</dbReference>
<dbReference type="HOGENOM" id="CLU_160655_0_1_11"/>
<dbReference type="Proteomes" id="UP000000603">
    <property type="component" value="Chromosome"/>
</dbReference>
<dbReference type="GO" id="GO:0005829">
    <property type="term" value="C:cytosol"/>
    <property type="evidence" value="ECO:0007669"/>
    <property type="project" value="TreeGrafter"/>
</dbReference>
<dbReference type="GO" id="GO:0015935">
    <property type="term" value="C:small ribosomal subunit"/>
    <property type="evidence" value="ECO:0007669"/>
    <property type="project" value="TreeGrafter"/>
</dbReference>
<dbReference type="GO" id="GO:0070181">
    <property type="term" value="F:small ribosomal subunit rRNA binding"/>
    <property type="evidence" value="ECO:0007669"/>
    <property type="project" value="TreeGrafter"/>
</dbReference>
<dbReference type="GO" id="GO:0003735">
    <property type="term" value="F:structural constituent of ribosome"/>
    <property type="evidence" value="ECO:0007669"/>
    <property type="project" value="InterPro"/>
</dbReference>
<dbReference type="GO" id="GO:0006412">
    <property type="term" value="P:translation"/>
    <property type="evidence" value="ECO:0007669"/>
    <property type="project" value="UniProtKB-UniRule"/>
</dbReference>
<dbReference type="FunFam" id="1.20.58.110:FF:000001">
    <property type="entry name" value="30S ribosomal protein S20"/>
    <property type="match status" value="1"/>
</dbReference>
<dbReference type="Gene3D" id="1.20.58.110">
    <property type="entry name" value="Ribosomal protein S20"/>
    <property type="match status" value="1"/>
</dbReference>
<dbReference type="HAMAP" id="MF_00500">
    <property type="entry name" value="Ribosomal_bS20"/>
    <property type="match status" value="1"/>
</dbReference>
<dbReference type="InterPro" id="IPR002583">
    <property type="entry name" value="Ribosomal_bS20"/>
</dbReference>
<dbReference type="InterPro" id="IPR036510">
    <property type="entry name" value="Ribosomal_bS20_sf"/>
</dbReference>
<dbReference type="NCBIfam" id="TIGR00029">
    <property type="entry name" value="S20"/>
    <property type="match status" value="1"/>
</dbReference>
<dbReference type="PANTHER" id="PTHR33398">
    <property type="entry name" value="30S RIBOSOMAL PROTEIN S20"/>
    <property type="match status" value="1"/>
</dbReference>
<dbReference type="PANTHER" id="PTHR33398:SF1">
    <property type="entry name" value="SMALL RIBOSOMAL SUBUNIT PROTEIN BS20C"/>
    <property type="match status" value="1"/>
</dbReference>
<dbReference type="Pfam" id="PF01649">
    <property type="entry name" value="Ribosomal_S20p"/>
    <property type="match status" value="1"/>
</dbReference>
<dbReference type="SUPFAM" id="SSF46992">
    <property type="entry name" value="Ribosomal protein S20"/>
    <property type="match status" value="1"/>
</dbReference>
<protein>
    <recommendedName>
        <fullName evidence="1">Small ribosomal subunit protein bS20</fullName>
    </recommendedName>
    <alternativeName>
        <fullName evidence="3">30S ribosomal protein S20</fullName>
    </alternativeName>
</protein>
<reference key="1">
    <citation type="journal article" date="2004" name="Science">
        <title>The complete genome sequence of Propionibacterium acnes, a commensal of human skin.</title>
        <authorList>
            <person name="Brueggemann H."/>
            <person name="Henne A."/>
            <person name="Hoster F."/>
            <person name="Liesegang H."/>
            <person name="Wiezer A."/>
            <person name="Strittmatter A."/>
            <person name="Hujer S."/>
            <person name="Duerre P."/>
            <person name="Gottschalk G."/>
        </authorList>
    </citation>
    <scope>NUCLEOTIDE SEQUENCE [LARGE SCALE GENOMIC DNA]</scope>
    <source>
        <strain>DSM 16379 / KPA171202</strain>
    </source>
</reference>
<gene>
    <name evidence="1" type="primary">rpsT</name>
    <name type="ordered locus">PPA0898</name>
</gene>
<sequence length="88" mass="9700">MPNIKSQIKRVKTNEKSRQRNKAVKSALRTYVRNFRRAAEAGDVEAATKAARVANRQLDKAASKGVIHKNQAANRKSAISKKLNSLAA</sequence>
<evidence type="ECO:0000255" key="1">
    <source>
        <dbReference type="HAMAP-Rule" id="MF_00500"/>
    </source>
</evidence>
<evidence type="ECO:0000256" key="2">
    <source>
        <dbReference type="SAM" id="MobiDB-lite"/>
    </source>
</evidence>
<evidence type="ECO:0000305" key="3"/>
<evidence type="ECO:0007829" key="4">
    <source>
        <dbReference type="PDB" id="8CWO"/>
    </source>
</evidence>
<organism>
    <name type="scientific">Cutibacterium acnes (strain DSM 16379 / KPA171202)</name>
    <name type="common">Propionibacterium acnes</name>
    <dbReference type="NCBI Taxonomy" id="267747"/>
    <lineage>
        <taxon>Bacteria</taxon>
        <taxon>Bacillati</taxon>
        <taxon>Actinomycetota</taxon>
        <taxon>Actinomycetes</taxon>
        <taxon>Propionibacteriales</taxon>
        <taxon>Propionibacteriaceae</taxon>
        <taxon>Cutibacterium</taxon>
    </lineage>
</organism>
<comment type="function">
    <text evidence="1">Binds directly to 16S ribosomal RNA.</text>
</comment>
<comment type="similarity">
    <text evidence="1">Belongs to the bacterial ribosomal protein bS20 family.</text>
</comment>
<feature type="chain" id="PRO_0000168009" description="Small ribosomal subunit protein bS20">
    <location>
        <begin position="1"/>
        <end position="88"/>
    </location>
</feature>
<feature type="region of interest" description="Disordered" evidence="2">
    <location>
        <begin position="1"/>
        <end position="25"/>
    </location>
</feature>
<feature type="region of interest" description="Disordered" evidence="2">
    <location>
        <begin position="68"/>
        <end position="88"/>
    </location>
</feature>
<feature type="helix" evidence="4">
    <location>
        <begin position="5"/>
        <end position="41"/>
    </location>
</feature>
<feature type="helix" evidence="4">
    <location>
        <begin position="45"/>
        <end position="64"/>
    </location>
</feature>
<feature type="helix" evidence="4">
    <location>
        <begin position="69"/>
        <end position="87"/>
    </location>
</feature>
<proteinExistence type="evidence at protein level"/>
<accession>Q6A9B3</accession>
<name>RS20_CUTAK</name>
<keyword id="KW-0002">3D-structure</keyword>
<keyword id="KW-0687">Ribonucleoprotein</keyword>
<keyword id="KW-0689">Ribosomal protein</keyword>
<keyword id="KW-0694">RNA-binding</keyword>
<keyword id="KW-0699">rRNA-binding</keyword>